<protein>
    <recommendedName>
        <fullName evidence="1">Bifunctional enzyme IspD/IspF</fullName>
    </recommendedName>
    <domain>
        <recommendedName>
            <fullName evidence="1">2-C-methyl-D-erythritol 4-phosphate cytidylyltransferase</fullName>
            <ecNumber evidence="1">2.7.7.60</ecNumber>
        </recommendedName>
        <alternativeName>
            <fullName evidence="1">4-diphosphocytidyl-2C-methyl-D-erythritol synthase</fullName>
        </alternativeName>
        <alternativeName>
            <fullName evidence="1">MEP cytidylyltransferase</fullName>
            <shortName evidence="1">MCT</shortName>
        </alternativeName>
    </domain>
    <domain>
        <recommendedName>
            <fullName evidence="1">2-C-methyl-D-erythritol 2,4-cyclodiphosphate synthase</fullName>
            <shortName evidence="1">MECDP-synthase</shortName>
            <shortName evidence="1">MECPP-synthase</shortName>
            <shortName evidence="1">MECPS</shortName>
            <ecNumber evidence="1">4.6.1.12</ecNumber>
        </recommendedName>
    </domain>
</protein>
<feature type="chain" id="PRO_0000292851" description="Bifunctional enzyme IspD/IspF">
    <location>
        <begin position="1"/>
        <end position="386"/>
    </location>
</feature>
<feature type="region of interest" description="2-C-methyl-D-erythritol 4-phosphate cytidylyltransferase" evidence="1">
    <location>
        <begin position="1"/>
        <end position="226"/>
    </location>
</feature>
<feature type="region of interest" description="2-C-methyl-D-erythritol 2,4-cyclodiphosphate synthase" evidence="1">
    <location>
        <begin position="227"/>
        <end position="386"/>
    </location>
</feature>
<feature type="binding site" evidence="1">
    <location>
        <begin position="233"/>
        <end position="235"/>
    </location>
    <ligand>
        <name>4-CDP-2-C-methyl-D-erythritol 2-phosphate</name>
        <dbReference type="ChEBI" id="CHEBI:57919"/>
    </ligand>
</feature>
<feature type="binding site" evidence="1">
    <location>
        <position position="233"/>
    </location>
    <ligand>
        <name>a divalent metal cation</name>
        <dbReference type="ChEBI" id="CHEBI:60240"/>
    </ligand>
</feature>
<feature type="binding site" evidence="1">
    <location>
        <position position="235"/>
    </location>
    <ligand>
        <name>a divalent metal cation</name>
        <dbReference type="ChEBI" id="CHEBI:60240"/>
    </ligand>
</feature>
<feature type="binding site" evidence="1">
    <location>
        <begin position="259"/>
        <end position="260"/>
    </location>
    <ligand>
        <name>4-CDP-2-C-methyl-D-erythritol 2-phosphate</name>
        <dbReference type="ChEBI" id="CHEBI:57919"/>
    </ligand>
</feature>
<feature type="binding site" evidence="1">
    <location>
        <position position="267"/>
    </location>
    <ligand>
        <name>a divalent metal cation</name>
        <dbReference type="ChEBI" id="CHEBI:60240"/>
    </ligand>
</feature>
<feature type="binding site" evidence="1">
    <location>
        <begin position="281"/>
        <end position="283"/>
    </location>
    <ligand>
        <name>4-CDP-2-C-methyl-D-erythritol 2-phosphate</name>
        <dbReference type="ChEBI" id="CHEBI:57919"/>
    </ligand>
</feature>
<feature type="binding site" evidence="1">
    <location>
        <begin position="357"/>
        <end position="360"/>
    </location>
    <ligand>
        <name>4-CDP-2-C-methyl-D-erythritol 2-phosphate</name>
        <dbReference type="ChEBI" id="CHEBI:57919"/>
    </ligand>
</feature>
<feature type="binding site" evidence="1">
    <location>
        <position position="364"/>
    </location>
    <ligand>
        <name>4-CDP-2-C-methyl-D-erythritol 2-phosphate</name>
        <dbReference type="ChEBI" id="CHEBI:57919"/>
    </ligand>
</feature>
<feature type="binding site" evidence="1">
    <location>
        <position position="367"/>
    </location>
    <ligand>
        <name>4-CDP-2-C-methyl-D-erythritol 2-phosphate</name>
        <dbReference type="ChEBI" id="CHEBI:57919"/>
    </ligand>
</feature>
<feature type="site" description="Transition state stabilizer" evidence="1">
    <location>
        <position position="22"/>
    </location>
</feature>
<feature type="site" description="Transition state stabilizer" evidence="1">
    <location>
        <position position="29"/>
    </location>
</feature>
<feature type="site" description="Positions MEP for the nucleophilic attack" evidence="1">
    <location>
        <position position="157"/>
    </location>
</feature>
<feature type="site" description="Positions MEP for the nucleophilic attack" evidence="1">
    <location>
        <position position="212"/>
    </location>
</feature>
<feature type="site" description="Transition state stabilizer" evidence="1">
    <location>
        <position position="259"/>
    </location>
</feature>
<feature type="site" description="Transition state stabilizer" evidence="1">
    <location>
        <position position="358"/>
    </location>
</feature>
<evidence type="ECO:0000255" key="1">
    <source>
        <dbReference type="HAMAP-Rule" id="MF_01520"/>
    </source>
</evidence>
<comment type="function">
    <text evidence="1">Bifunctional enzyme that catalyzes the formation of 4-diphosphocytidyl-2-C-methyl-D-erythritol from CTP and 2-C-methyl-D-erythritol 4-phosphate (MEP) (IspD), and catalyzes the conversion of 4-diphosphocytidyl-2-C-methyl-D-erythritol 2-phosphate (CDP-ME2P) to 2-C-methyl-D-erythritol 2,4-cyclodiphosphate (ME-CPP) with a corresponding release of cytidine 5-monophosphate (CMP) (IspF).</text>
</comment>
<comment type="catalytic activity">
    <reaction evidence="1">
        <text>2-C-methyl-D-erythritol 4-phosphate + CTP + H(+) = 4-CDP-2-C-methyl-D-erythritol + diphosphate</text>
        <dbReference type="Rhea" id="RHEA:13429"/>
        <dbReference type="ChEBI" id="CHEBI:15378"/>
        <dbReference type="ChEBI" id="CHEBI:33019"/>
        <dbReference type="ChEBI" id="CHEBI:37563"/>
        <dbReference type="ChEBI" id="CHEBI:57823"/>
        <dbReference type="ChEBI" id="CHEBI:58262"/>
        <dbReference type="EC" id="2.7.7.60"/>
    </reaction>
</comment>
<comment type="catalytic activity">
    <reaction evidence="1">
        <text>4-CDP-2-C-methyl-D-erythritol 2-phosphate = 2-C-methyl-D-erythritol 2,4-cyclic diphosphate + CMP</text>
        <dbReference type="Rhea" id="RHEA:23864"/>
        <dbReference type="ChEBI" id="CHEBI:57919"/>
        <dbReference type="ChEBI" id="CHEBI:58483"/>
        <dbReference type="ChEBI" id="CHEBI:60377"/>
        <dbReference type="EC" id="4.6.1.12"/>
    </reaction>
</comment>
<comment type="cofactor">
    <cofactor evidence="1">
        <name>a divalent metal cation</name>
        <dbReference type="ChEBI" id="CHEBI:60240"/>
    </cofactor>
</comment>
<comment type="pathway">
    <text evidence="1">Isoprenoid biosynthesis; isopentenyl diphosphate biosynthesis via DXP pathway; isopentenyl diphosphate from 1-deoxy-D-xylulose 5-phosphate: step 2/6.</text>
</comment>
<comment type="pathway">
    <text evidence="1">Isoprenoid biosynthesis; isopentenyl diphosphate biosynthesis via DXP pathway; isopentenyl diphosphate from 1-deoxy-D-xylulose 5-phosphate: step 4/6.</text>
</comment>
<comment type="similarity">
    <text evidence="1">In the N-terminal section; belongs to the IspD/TarI cytidylyltransferase family. IspD subfamily.</text>
</comment>
<comment type="similarity">
    <text evidence="1">In the C-terminal section; belongs to the IspF family.</text>
</comment>
<gene>
    <name evidence="1" type="primary">ispDF</name>
    <name type="ordered locus">ELI_06290</name>
</gene>
<dbReference type="EC" id="2.7.7.60" evidence="1"/>
<dbReference type="EC" id="4.6.1.12" evidence="1"/>
<dbReference type="EMBL" id="CP000157">
    <property type="protein sequence ID" value="ABC63350.1"/>
    <property type="molecule type" value="Genomic_DNA"/>
</dbReference>
<dbReference type="RefSeq" id="WP_011414186.1">
    <property type="nucleotide sequence ID" value="NC_007722.1"/>
</dbReference>
<dbReference type="SMR" id="Q2NAE1"/>
<dbReference type="STRING" id="314225.ELI_06290"/>
<dbReference type="KEGG" id="eli:ELI_06290"/>
<dbReference type="eggNOG" id="COG0245">
    <property type="taxonomic scope" value="Bacteria"/>
</dbReference>
<dbReference type="eggNOG" id="COG1211">
    <property type="taxonomic scope" value="Bacteria"/>
</dbReference>
<dbReference type="HOGENOM" id="CLU_042800_2_5_5"/>
<dbReference type="OrthoDB" id="9804336at2"/>
<dbReference type="UniPathway" id="UPA00056">
    <property type="reaction ID" value="UER00093"/>
</dbReference>
<dbReference type="UniPathway" id="UPA00056">
    <property type="reaction ID" value="UER00095"/>
</dbReference>
<dbReference type="Proteomes" id="UP000008808">
    <property type="component" value="Chromosome"/>
</dbReference>
<dbReference type="GO" id="GO:0008685">
    <property type="term" value="F:2-C-methyl-D-erythritol 2,4-cyclodiphosphate synthase activity"/>
    <property type="evidence" value="ECO:0007669"/>
    <property type="project" value="UniProtKB-UniRule"/>
</dbReference>
<dbReference type="GO" id="GO:0050518">
    <property type="term" value="F:2-C-methyl-D-erythritol 4-phosphate cytidylyltransferase activity"/>
    <property type="evidence" value="ECO:0007669"/>
    <property type="project" value="UniProtKB-UniRule"/>
</dbReference>
<dbReference type="GO" id="GO:0046872">
    <property type="term" value="F:metal ion binding"/>
    <property type="evidence" value="ECO:0007669"/>
    <property type="project" value="UniProtKB-KW"/>
</dbReference>
<dbReference type="GO" id="GO:0019288">
    <property type="term" value="P:isopentenyl diphosphate biosynthetic process, methylerythritol 4-phosphate pathway"/>
    <property type="evidence" value="ECO:0007669"/>
    <property type="project" value="UniProtKB-UniRule"/>
</dbReference>
<dbReference type="GO" id="GO:0016114">
    <property type="term" value="P:terpenoid biosynthetic process"/>
    <property type="evidence" value="ECO:0007669"/>
    <property type="project" value="InterPro"/>
</dbReference>
<dbReference type="CDD" id="cd02516">
    <property type="entry name" value="CDP-ME_synthetase"/>
    <property type="match status" value="1"/>
</dbReference>
<dbReference type="CDD" id="cd00554">
    <property type="entry name" value="MECDP_synthase"/>
    <property type="match status" value="1"/>
</dbReference>
<dbReference type="FunFam" id="3.30.1330.50:FF:000001">
    <property type="entry name" value="2-C-methyl-D-erythritol 2,4-cyclodiphosphate synthase"/>
    <property type="match status" value="1"/>
</dbReference>
<dbReference type="Gene3D" id="3.30.1330.50">
    <property type="entry name" value="2-C-methyl-D-erythritol 2,4-cyclodiphosphate synthase"/>
    <property type="match status" value="1"/>
</dbReference>
<dbReference type="Gene3D" id="3.90.550.10">
    <property type="entry name" value="Spore Coat Polysaccharide Biosynthesis Protein SpsA, Chain A"/>
    <property type="match status" value="1"/>
</dbReference>
<dbReference type="HAMAP" id="MF_01520">
    <property type="entry name" value="IspDF"/>
    <property type="match status" value="1"/>
</dbReference>
<dbReference type="HAMAP" id="MF_00107">
    <property type="entry name" value="IspF"/>
    <property type="match status" value="1"/>
</dbReference>
<dbReference type="InterPro" id="IPR001228">
    <property type="entry name" value="IspD"/>
</dbReference>
<dbReference type="InterPro" id="IPR026596">
    <property type="entry name" value="IspD/F"/>
</dbReference>
<dbReference type="InterPro" id="IPR034683">
    <property type="entry name" value="IspD/TarI"/>
</dbReference>
<dbReference type="InterPro" id="IPR018294">
    <property type="entry name" value="ISPD_synthase_CS"/>
</dbReference>
<dbReference type="InterPro" id="IPR003526">
    <property type="entry name" value="MECDP_synthase"/>
</dbReference>
<dbReference type="InterPro" id="IPR020555">
    <property type="entry name" value="MECDP_synthase_CS"/>
</dbReference>
<dbReference type="InterPro" id="IPR036571">
    <property type="entry name" value="MECDP_synthase_sf"/>
</dbReference>
<dbReference type="InterPro" id="IPR029044">
    <property type="entry name" value="Nucleotide-diphossugar_trans"/>
</dbReference>
<dbReference type="NCBIfam" id="TIGR00453">
    <property type="entry name" value="ispD"/>
    <property type="match status" value="1"/>
</dbReference>
<dbReference type="NCBIfam" id="TIGR00151">
    <property type="entry name" value="ispF"/>
    <property type="match status" value="1"/>
</dbReference>
<dbReference type="NCBIfam" id="NF006899">
    <property type="entry name" value="PRK09382.1"/>
    <property type="match status" value="1"/>
</dbReference>
<dbReference type="PANTHER" id="PTHR43181">
    <property type="entry name" value="2-C-METHYL-D-ERYTHRITOL 2,4-CYCLODIPHOSPHATE SYNTHASE, CHLOROPLASTIC"/>
    <property type="match status" value="1"/>
</dbReference>
<dbReference type="PANTHER" id="PTHR43181:SF1">
    <property type="entry name" value="2-C-METHYL-D-ERYTHRITOL 2,4-CYCLODIPHOSPHATE SYNTHASE, CHLOROPLASTIC"/>
    <property type="match status" value="1"/>
</dbReference>
<dbReference type="Pfam" id="PF01128">
    <property type="entry name" value="IspD"/>
    <property type="match status" value="1"/>
</dbReference>
<dbReference type="Pfam" id="PF02542">
    <property type="entry name" value="YgbB"/>
    <property type="match status" value="1"/>
</dbReference>
<dbReference type="SUPFAM" id="SSF69765">
    <property type="entry name" value="IpsF-like"/>
    <property type="match status" value="1"/>
</dbReference>
<dbReference type="SUPFAM" id="SSF53448">
    <property type="entry name" value="Nucleotide-diphospho-sugar transferases"/>
    <property type="match status" value="1"/>
</dbReference>
<dbReference type="PROSITE" id="PS01295">
    <property type="entry name" value="ISPD"/>
    <property type="match status" value="1"/>
</dbReference>
<dbReference type="PROSITE" id="PS01350">
    <property type="entry name" value="ISPF"/>
    <property type="match status" value="1"/>
</dbReference>
<reference key="1">
    <citation type="journal article" date="2009" name="J. Bacteriol.">
        <title>Complete genome sequence of Erythrobacter litoralis HTCC2594.</title>
        <authorList>
            <person name="Oh H.M."/>
            <person name="Giovannoni S.J."/>
            <person name="Ferriera S."/>
            <person name="Johnson J."/>
            <person name="Cho J.C."/>
        </authorList>
    </citation>
    <scope>NUCLEOTIDE SEQUENCE [LARGE SCALE GENOMIC DNA]</scope>
    <source>
        <strain>HTCC2594</strain>
    </source>
</reference>
<keyword id="KW-0414">Isoprene biosynthesis</keyword>
<keyword id="KW-0456">Lyase</keyword>
<keyword id="KW-0479">Metal-binding</keyword>
<keyword id="KW-0511">Multifunctional enzyme</keyword>
<keyword id="KW-0548">Nucleotidyltransferase</keyword>
<keyword id="KW-1185">Reference proteome</keyword>
<keyword id="KW-0808">Transferase</keyword>
<name>ISPDF_ERYLH</name>
<proteinExistence type="inferred from homology"/>
<organism>
    <name type="scientific">Erythrobacter litoralis (strain HTCC2594)</name>
    <dbReference type="NCBI Taxonomy" id="314225"/>
    <lineage>
        <taxon>Bacteria</taxon>
        <taxon>Pseudomonadati</taxon>
        <taxon>Pseudomonadota</taxon>
        <taxon>Alphaproteobacteria</taxon>
        <taxon>Sphingomonadales</taxon>
        <taxon>Erythrobacteraceae</taxon>
        <taxon>Erythrobacter/Porphyrobacter group</taxon>
        <taxon>Erythrobacter</taxon>
    </lineage>
</organism>
<sequence length="386" mass="40308">MATPSPLPSFAAIVVAAGKGLRAGQPVPKQFATWRGKPVLRHSVESLRAAGADPIVVAIPDHAGDVAAKALDGITEVVFVTGGQTRQDSVRAALERLSSVPPERVLIHDAARAILPTPVIERVLHGLDESGGAIPVLPVVDSLAVAAGERMADKADRESLRRVQTPQGFRFSDILAAHRAWTGATDAGDDAQVLMAHGGDIALVEGDEALKKLTFAEDFMADLLPVRVGTGFDVHKLEAGEELWLGGIRLEHDKGLAGHSDADVALHAIVDALLGAIGKGDIGDHFPPSDPQWKGAASSAFIEHAAKLVDEAGYRVGNIDLTIICEAPRIGPHRDAMGQRIAELLATSPDAISVKATTTEKLGFTGRGEGIAAQAAATVVRKDTPA</sequence>
<accession>Q2NAE1</accession>